<name>METE_LACPL</name>
<accession>Q88X63</accession>
<accession>F9UND5</accession>
<reference key="1">
    <citation type="journal article" date="2003" name="Proc. Natl. Acad. Sci. U.S.A.">
        <title>Complete genome sequence of Lactobacillus plantarum WCFS1.</title>
        <authorList>
            <person name="Kleerebezem M."/>
            <person name="Boekhorst J."/>
            <person name="van Kranenburg R."/>
            <person name="Molenaar D."/>
            <person name="Kuipers O.P."/>
            <person name="Leer R."/>
            <person name="Tarchini R."/>
            <person name="Peters S.A."/>
            <person name="Sandbrink H.M."/>
            <person name="Fiers M.W.E.J."/>
            <person name="Stiekema W."/>
            <person name="Klein Lankhorst R.M."/>
            <person name="Bron P.A."/>
            <person name="Hoffer S.M."/>
            <person name="Nierop Groot M.N."/>
            <person name="Kerkhoven R."/>
            <person name="De Vries M."/>
            <person name="Ursing B."/>
            <person name="De Vos W.M."/>
            <person name="Siezen R.J."/>
        </authorList>
    </citation>
    <scope>NUCLEOTIDE SEQUENCE [LARGE SCALE GENOMIC DNA]</scope>
    <source>
        <strain>ATCC BAA-793 / NCIMB 8826 / WCFS1</strain>
    </source>
</reference>
<reference key="2">
    <citation type="journal article" date="2012" name="J. Bacteriol.">
        <title>Complete resequencing and reannotation of the Lactobacillus plantarum WCFS1 genome.</title>
        <authorList>
            <person name="Siezen R.J."/>
            <person name="Francke C."/>
            <person name="Renckens B."/>
            <person name="Boekhorst J."/>
            <person name="Wels M."/>
            <person name="Kleerebezem M."/>
            <person name="van Hijum S.A."/>
        </authorList>
    </citation>
    <scope>NUCLEOTIDE SEQUENCE [LARGE SCALE GENOMIC DNA]</scope>
    <scope>GENOME REANNOTATION</scope>
    <source>
        <strain>ATCC BAA-793 / NCIMB 8826 / WCFS1</strain>
    </source>
</reference>
<comment type="function">
    <text evidence="1">Catalyzes the transfer of a methyl group from 5-methyltetrahydrofolate to homocysteine resulting in methionine formation.</text>
</comment>
<comment type="catalytic activity">
    <reaction evidence="1">
        <text>5-methyltetrahydropteroyltri-L-glutamate + L-homocysteine = tetrahydropteroyltri-L-glutamate + L-methionine</text>
        <dbReference type="Rhea" id="RHEA:21196"/>
        <dbReference type="ChEBI" id="CHEBI:57844"/>
        <dbReference type="ChEBI" id="CHEBI:58140"/>
        <dbReference type="ChEBI" id="CHEBI:58199"/>
        <dbReference type="ChEBI" id="CHEBI:58207"/>
        <dbReference type="EC" id="2.1.1.14"/>
    </reaction>
</comment>
<comment type="cofactor">
    <cofactor evidence="1">
        <name>Zn(2+)</name>
        <dbReference type="ChEBI" id="CHEBI:29105"/>
    </cofactor>
    <text evidence="1">Binds 1 zinc ion per subunit.</text>
</comment>
<comment type="pathway">
    <text evidence="1">Amino-acid biosynthesis; L-methionine biosynthesis via de novo pathway; L-methionine from L-homocysteine (MetE route): step 1/1.</text>
</comment>
<comment type="similarity">
    <text evidence="1">Belongs to the vitamin-B12 independent methionine synthase family.</text>
</comment>
<sequence length="768" mass="86433">MTIINSNLGYPRLGEHREWKHLLEHFWKGQLDNVTFHATAKKLRLANLKKQRDLGVDYIPVADNSDYDHVLDTLVAFNAIPSRFGHFDHQLDLPDYYAIARGTDTAVAAEMTKWFNINYHYIVPEFDDVSFKLLDNRWLRYYQEAKQELGIDGKPVILGPISFLKLGKRHGQYLDDAAVNELLPQLLPLYQQVFEELATAGAKWIQLDEPTLVKTTTVAELAPYQTALEHLHAAVPSLKIELQTYFDSLDQYDKIVTWPIQALGLDLVHDHGENLAHLVDHGFPTDKILAAGIIDGHNVWASDLQAKLALVQQLRQIVTDDQLWLQPANSLLHVPITTKNETKADPVLLGGLAFADQKLAELHTLTVAANQGVAAVQAVFDHNQANLTALNQSSHRNNQSVRAAEAQLSNQKFERQAPFATRIKLQHDRLHLPLLPTTTIGSFPQSAQVRAKRAAWRKGNLTDADYQAFLHAETKRWIKLQEDLGLDVLVHGEFERTDMVEYFGQKLTGFYATQNGWVQSYGSRGVRPPVIFGDVAYTEPITVAESVYAQSLTDQPVKGMLTAPLTIINWSFVRDDIPRAQVQNQIALALRQEVQNLEKAGIKIIQVDEPALREGLPLKQRHWQAYLDEAVYSFKITTTGVQNDTQIHTHMCYSNFADIINTIKALDADVISIETSRSHGEIISAFEQTGYDQEIGLGVYDIHSPRVPSVAEIEANIQRALRVIDARQFWINPDCGLKTRQESETLAALKNMIAARNAIQAQLTTSIH</sequence>
<protein>
    <recommendedName>
        <fullName evidence="1">5-methyltetrahydropteroyltriglutamate--homocysteine methyltransferase</fullName>
        <ecNumber evidence="1">2.1.1.14</ecNumber>
    </recommendedName>
    <alternativeName>
        <fullName evidence="1">Cobalamin-independent methionine synthase</fullName>
    </alternativeName>
    <alternativeName>
        <fullName evidence="1">Methionine synthase, vitamin-B12 independent isozyme</fullName>
    </alternativeName>
</protein>
<feature type="chain" id="PRO_0000098635" description="5-methyltetrahydropteroyltriglutamate--homocysteine methyltransferase">
    <location>
        <begin position="1"/>
        <end position="768"/>
    </location>
</feature>
<feature type="active site" description="Proton donor" evidence="1">
    <location>
        <position position="703"/>
    </location>
</feature>
<feature type="binding site" evidence="1">
    <location>
        <begin position="17"/>
        <end position="20"/>
    </location>
    <ligand>
        <name>5-methyltetrahydropteroyltri-L-glutamate</name>
        <dbReference type="ChEBI" id="CHEBI:58207"/>
    </ligand>
</feature>
<feature type="binding site" evidence="1">
    <location>
        <position position="113"/>
    </location>
    <ligand>
        <name>5-methyltetrahydropteroyltri-L-glutamate</name>
        <dbReference type="ChEBI" id="CHEBI:58207"/>
    </ligand>
</feature>
<feature type="binding site" evidence="1">
    <location>
        <begin position="440"/>
        <end position="442"/>
    </location>
    <ligand>
        <name>L-homocysteine</name>
        <dbReference type="ChEBI" id="CHEBI:58199"/>
    </ligand>
</feature>
<feature type="binding site" evidence="1">
    <location>
        <begin position="440"/>
        <end position="442"/>
    </location>
    <ligand>
        <name>L-methionine</name>
        <dbReference type="ChEBI" id="CHEBI:57844"/>
    </ligand>
</feature>
<feature type="binding site" evidence="1">
    <location>
        <position position="493"/>
    </location>
    <ligand>
        <name>L-homocysteine</name>
        <dbReference type="ChEBI" id="CHEBI:58199"/>
    </ligand>
</feature>
<feature type="binding site" evidence="1">
    <location>
        <position position="493"/>
    </location>
    <ligand>
        <name>L-methionine</name>
        <dbReference type="ChEBI" id="CHEBI:57844"/>
    </ligand>
</feature>
<feature type="binding site" evidence="1">
    <location>
        <position position="570"/>
    </location>
    <ligand>
        <name>5-methyltetrahydropteroyltri-L-glutamate</name>
        <dbReference type="ChEBI" id="CHEBI:58207"/>
    </ligand>
</feature>
<feature type="binding site" evidence="1">
    <location>
        <position position="608"/>
    </location>
    <ligand>
        <name>L-homocysteine</name>
        <dbReference type="ChEBI" id="CHEBI:58199"/>
    </ligand>
</feature>
<feature type="binding site" evidence="1">
    <location>
        <position position="608"/>
    </location>
    <ligand>
        <name>L-methionine</name>
        <dbReference type="ChEBI" id="CHEBI:57844"/>
    </ligand>
</feature>
<feature type="binding site" evidence="1">
    <location>
        <position position="614"/>
    </location>
    <ligand>
        <name>5-methyltetrahydropteroyltri-L-glutamate</name>
        <dbReference type="ChEBI" id="CHEBI:58207"/>
    </ligand>
</feature>
<feature type="binding site" evidence="1">
    <location>
        <position position="650"/>
    </location>
    <ligand>
        <name>Zn(2+)</name>
        <dbReference type="ChEBI" id="CHEBI:29105"/>
        <note>catalytic</note>
    </ligand>
</feature>
<feature type="binding site" evidence="1">
    <location>
        <position position="652"/>
    </location>
    <ligand>
        <name>Zn(2+)</name>
        <dbReference type="ChEBI" id="CHEBI:29105"/>
        <note>catalytic</note>
    </ligand>
</feature>
<feature type="binding site" evidence="1">
    <location>
        <position position="674"/>
    </location>
    <ligand>
        <name>Zn(2+)</name>
        <dbReference type="ChEBI" id="CHEBI:29105"/>
        <note>catalytic</note>
    </ligand>
</feature>
<feature type="binding site" evidence="1">
    <location>
        <position position="735"/>
    </location>
    <ligand>
        <name>Zn(2+)</name>
        <dbReference type="ChEBI" id="CHEBI:29105"/>
        <note>catalytic</note>
    </ligand>
</feature>
<gene>
    <name evidence="1" type="primary">metE</name>
    <name type="ordered locus">lp_1375</name>
</gene>
<keyword id="KW-0028">Amino-acid biosynthesis</keyword>
<keyword id="KW-0479">Metal-binding</keyword>
<keyword id="KW-0486">Methionine biosynthesis</keyword>
<keyword id="KW-0489">Methyltransferase</keyword>
<keyword id="KW-1185">Reference proteome</keyword>
<keyword id="KW-0677">Repeat</keyword>
<keyword id="KW-0808">Transferase</keyword>
<keyword id="KW-0862">Zinc</keyword>
<organism>
    <name type="scientific">Lactiplantibacillus plantarum (strain ATCC BAA-793 / NCIMB 8826 / WCFS1)</name>
    <name type="common">Lactobacillus plantarum</name>
    <dbReference type="NCBI Taxonomy" id="220668"/>
    <lineage>
        <taxon>Bacteria</taxon>
        <taxon>Bacillati</taxon>
        <taxon>Bacillota</taxon>
        <taxon>Bacilli</taxon>
        <taxon>Lactobacillales</taxon>
        <taxon>Lactobacillaceae</taxon>
        <taxon>Lactiplantibacillus</taxon>
    </lineage>
</organism>
<proteinExistence type="inferred from homology"/>
<evidence type="ECO:0000255" key="1">
    <source>
        <dbReference type="HAMAP-Rule" id="MF_00172"/>
    </source>
</evidence>
<dbReference type="EC" id="2.1.1.14" evidence="1"/>
<dbReference type="EMBL" id="AL935263">
    <property type="protein sequence ID" value="CCC78724.1"/>
    <property type="molecule type" value="Genomic_DNA"/>
</dbReference>
<dbReference type="RefSeq" id="WP_011101377.1">
    <property type="nucleotide sequence ID" value="NC_004567.2"/>
</dbReference>
<dbReference type="RefSeq" id="YP_004889238.1">
    <property type="nucleotide sequence ID" value="NC_004567.2"/>
</dbReference>
<dbReference type="SMR" id="Q88X63"/>
<dbReference type="STRING" id="220668.lp_1375"/>
<dbReference type="EnsemblBacteria" id="CCC78724">
    <property type="protein sequence ID" value="CCC78724"/>
    <property type="gene ID" value="lp_1375"/>
</dbReference>
<dbReference type="KEGG" id="lpl:lp_1375"/>
<dbReference type="PATRIC" id="fig|220668.9.peg.1155"/>
<dbReference type="eggNOG" id="COG0620">
    <property type="taxonomic scope" value="Bacteria"/>
</dbReference>
<dbReference type="HOGENOM" id="CLU_013175_0_0_9"/>
<dbReference type="OrthoDB" id="244285at2"/>
<dbReference type="PhylomeDB" id="Q88X63"/>
<dbReference type="UniPathway" id="UPA00051">
    <property type="reaction ID" value="UER00082"/>
</dbReference>
<dbReference type="Proteomes" id="UP000000432">
    <property type="component" value="Chromosome"/>
</dbReference>
<dbReference type="GO" id="GO:0003871">
    <property type="term" value="F:5-methyltetrahydropteroyltriglutamate-homocysteine S-methyltransferase activity"/>
    <property type="evidence" value="ECO:0007669"/>
    <property type="project" value="UniProtKB-UniRule"/>
</dbReference>
<dbReference type="GO" id="GO:0008270">
    <property type="term" value="F:zinc ion binding"/>
    <property type="evidence" value="ECO:0007669"/>
    <property type="project" value="InterPro"/>
</dbReference>
<dbReference type="GO" id="GO:0009086">
    <property type="term" value="P:methionine biosynthetic process"/>
    <property type="evidence" value="ECO:0007669"/>
    <property type="project" value="UniProtKB-UniRule"/>
</dbReference>
<dbReference type="GO" id="GO:0032259">
    <property type="term" value="P:methylation"/>
    <property type="evidence" value="ECO:0007669"/>
    <property type="project" value="UniProtKB-KW"/>
</dbReference>
<dbReference type="CDD" id="cd03311">
    <property type="entry name" value="CIMS_C_terminal_like"/>
    <property type="match status" value="1"/>
</dbReference>
<dbReference type="CDD" id="cd03312">
    <property type="entry name" value="CIMS_N_terminal_like"/>
    <property type="match status" value="1"/>
</dbReference>
<dbReference type="Gene3D" id="3.20.20.210">
    <property type="match status" value="2"/>
</dbReference>
<dbReference type="HAMAP" id="MF_00172">
    <property type="entry name" value="Meth_synth"/>
    <property type="match status" value="1"/>
</dbReference>
<dbReference type="InterPro" id="IPR013215">
    <property type="entry name" value="Cbl-indep_Met_Synth_N"/>
</dbReference>
<dbReference type="InterPro" id="IPR006276">
    <property type="entry name" value="Cobalamin-indep_Met_synthase"/>
</dbReference>
<dbReference type="InterPro" id="IPR002629">
    <property type="entry name" value="Met_Synth_C/arc"/>
</dbReference>
<dbReference type="InterPro" id="IPR038071">
    <property type="entry name" value="UROD/MetE-like_sf"/>
</dbReference>
<dbReference type="NCBIfam" id="TIGR01371">
    <property type="entry name" value="met_syn_B12ind"/>
    <property type="match status" value="1"/>
</dbReference>
<dbReference type="NCBIfam" id="NF003556">
    <property type="entry name" value="PRK05222.1"/>
    <property type="match status" value="1"/>
</dbReference>
<dbReference type="PANTHER" id="PTHR30519">
    <property type="entry name" value="5-METHYLTETRAHYDROPTEROYLTRIGLUTAMATE--HOMOCYSTEINE METHYLTRANSFERASE"/>
    <property type="match status" value="1"/>
</dbReference>
<dbReference type="Pfam" id="PF08267">
    <property type="entry name" value="Meth_synt_1"/>
    <property type="match status" value="1"/>
</dbReference>
<dbReference type="Pfam" id="PF01717">
    <property type="entry name" value="Meth_synt_2"/>
    <property type="match status" value="1"/>
</dbReference>
<dbReference type="PIRSF" id="PIRSF000382">
    <property type="entry name" value="MeTrfase_B12_ind"/>
    <property type="match status" value="1"/>
</dbReference>
<dbReference type="SUPFAM" id="SSF51726">
    <property type="entry name" value="UROD/MetE-like"/>
    <property type="match status" value="2"/>
</dbReference>